<feature type="chain" id="PRO_0000294638" description="ATP-dependent RNA helicase MAK5">
    <location>
        <begin position="1"/>
        <end position="760"/>
    </location>
</feature>
<feature type="domain" description="Helicase ATP-binding" evidence="2">
    <location>
        <begin position="218"/>
        <end position="418"/>
    </location>
</feature>
<feature type="domain" description="Helicase C-terminal" evidence="3">
    <location>
        <begin position="451"/>
        <end position="616"/>
    </location>
</feature>
<feature type="region of interest" description="Disordered" evidence="5">
    <location>
        <begin position="1"/>
        <end position="43"/>
    </location>
</feature>
<feature type="region of interest" description="Disordered" evidence="5">
    <location>
        <begin position="88"/>
        <end position="167"/>
    </location>
</feature>
<feature type="region of interest" description="Disordered" evidence="5">
    <location>
        <begin position="676"/>
        <end position="699"/>
    </location>
</feature>
<feature type="short sequence motif" description="Q motif" evidence="4">
    <location>
        <begin position="187"/>
        <end position="215"/>
    </location>
</feature>
<feature type="short sequence motif" description="DEAD box" evidence="2">
    <location>
        <begin position="353"/>
        <end position="356"/>
    </location>
</feature>
<feature type="compositionally biased region" description="Acidic residues" evidence="5">
    <location>
        <begin position="93"/>
        <end position="107"/>
    </location>
</feature>
<feature type="compositionally biased region" description="Low complexity" evidence="5">
    <location>
        <begin position="125"/>
        <end position="136"/>
    </location>
</feature>
<feature type="compositionally biased region" description="Basic and acidic residues" evidence="5">
    <location>
        <begin position="137"/>
        <end position="161"/>
    </location>
</feature>
<feature type="binding site" evidence="2">
    <location>
        <begin position="231"/>
        <end position="238"/>
    </location>
    <ligand>
        <name>ATP</name>
        <dbReference type="ChEBI" id="CHEBI:30616"/>
    </ligand>
</feature>
<accession>A4REU9</accession>
<accession>G4NBE8</accession>
<comment type="function">
    <text evidence="1">ATP-binding RNA helicase involved in the biogenesis of 60S ribosomal subunits and is required for the normal formation of 25S and 5.8S rRNAs.</text>
</comment>
<comment type="catalytic activity">
    <reaction>
        <text>ATP + H2O = ADP + phosphate + H(+)</text>
        <dbReference type="Rhea" id="RHEA:13065"/>
        <dbReference type="ChEBI" id="CHEBI:15377"/>
        <dbReference type="ChEBI" id="CHEBI:15378"/>
        <dbReference type="ChEBI" id="CHEBI:30616"/>
        <dbReference type="ChEBI" id="CHEBI:43474"/>
        <dbReference type="ChEBI" id="CHEBI:456216"/>
        <dbReference type="EC" id="3.6.4.13"/>
    </reaction>
</comment>
<comment type="subcellular location">
    <subcellularLocation>
        <location evidence="1">Nucleus</location>
        <location evidence="1">Nucleolus</location>
    </subcellularLocation>
</comment>
<comment type="domain">
    <text>The Q motif is unique to and characteristic of the DEAD box family of RNA helicases and controls ATP binding and hydrolysis.</text>
</comment>
<comment type="similarity">
    <text evidence="6">Belongs to the DEAD box helicase family. DDX24/MAK5 subfamily.</text>
</comment>
<reference key="1">
    <citation type="journal article" date="2005" name="Nature">
        <title>The genome sequence of the rice blast fungus Magnaporthe grisea.</title>
        <authorList>
            <person name="Dean R.A."/>
            <person name="Talbot N.J."/>
            <person name="Ebbole D.J."/>
            <person name="Farman M.L."/>
            <person name="Mitchell T.K."/>
            <person name="Orbach M.J."/>
            <person name="Thon M.R."/>
            <person name="Kulkarni R."/>
            <person name="Xu J.-R."/>
            <person name="Pan H."/>
            <person name="Read N.D."/>
            <person name="Lee Y.-H."/>
            <person name="Carbone I."/>
            <person name="Brown D."/>
            <person name="Oh Y.Y."/>
            <person name="Donofrio N."/>
            <person name="Jeong J.S."/>
            <person name="Soanes D.M."/>
            <person name="Djonovic S."/>
            <person name="Kolomiets E."/>
            <person name="Rehmeyer C."/>
            <person name="Li W."/>
            <person name="Harding M."/>
            <person name="Kim S."/>
            <person name="Lebrun M.-H."/>
            <person name="Bohnert H."/>
            <person name="Coughlan S."/>
            <person name="Butler J."/>
            <person name="Calvo S.E."/>
            <person name="Ma L.-J."/>
            <person name="Nicol R."/>
            <person name="Purcell S."/>
            <person name="Nusbaum C."/>
            <person name="Galagan J.E."/>
            <person name="Birren B.W."/>
        </authorList>
    </citation>
    <scope>NUCLEOTIDE SEQUENCE [LARGE SCALE GENOMIC DNA]</scope>
    <source>
        <strain>70-15 / ATCC MYA-4617 / FGSC 8958</strain>
    </source>
</reference>
<gene>
    <name type="primary">MAK5</name>
    <name type="ORF">MGG_00560</name>
</gene>
<keyword id="KW-0067">ATP-binding</keyword>
<keyword id="KW-0347">Helicase</keyword>
<keyword id="KW-0378">Hydrolase</keyword>
<keyword id="KW-0547">Nucleotide-binding</keyword>
<keyword id="KW-0539">Nucleus</keyword>
<keyword id="KW-1185">Reference proteome</keyword>
<keyword id="KW-0690">Ribosome biogenesis</keyword>
<keyword id="KW-0694">RNA-binding</keyword>
<keyword id="KW-0698">rRNA processing</keyword>
<dbReference type="EC" id="3.6.4.13"/>
<dbReference type="EMBL" id="CM001235">
    <property type="protein sequence ID" value="EHA48905.1"/>
    <property type="molecule type" value="Genomic_DNA"/>
</dbReference>
<dbReference type="RefSeq" id="XP_003718489.1">
    <property type="nucleotide sequence ID" value="XM_003718441.1"/>
</dbReference>
<dbReference type="SMR" id="A4REU9"/>
<dbReference type="FunCoup" id="A4REU9">
    <property type="interactions" value="920"/>
</dbReference>
<dbReference type="STRING" id="242507.A4REU9"/>
<dbReference type="GeneID" id="2674484"/>
<dbReference type="KEGG" id="mgr:MGG_00560"/>
<dbReference type="VEuPathDB" id="FungiDB:MGG_00560"/>
<dbReference type="eggNOG" id="KOG0347">
    <property type="taxonomic scope" value="Eukaryota"/>
</dbReference>
<dbReference type="HOGENOM" id="CLU_003041_13_0_1"/>
<dbReference type="InParanoid" id="A4REU9"/>
<dbReference type="OMA" id="QMIQKAR"/>
<dbReference type="OrthoDB" id="4310724at2759"/>
<dbReference type="Proteomes" id="UP000009058">
    <property type="component" value="Chromosome 5"/>
</dbReference>
<dbReference type="GO" id="GO:0005730">
    <property type="term" value="C:nucleolus"/>
    <property type="evidence" value="ECO:0007669"/>
    <property type="project" value="UniProtKB-SubCell"/>
</dbReference>
<dbReference type="GO" id="GO:0005524">
    <property type="term" value="F:ATP binding"/>
    <property type="evidence" value="ECO:0007669"/>
    <property type="project" value="UniProtKB-KW"/>
</dbReference>
<dbReference type="GO" id="GO:0016887">
    <property type="term" value="F:ATP hydrolysis activity"/>
    <property type="evidence" value="ECO:0007669"/>
    <property type="project" value="RHEA"/>
</dbReference>
<dbReference type="GO" id="GO:0003723">
    <property type="term" value="F:RNA binding"/>
    <property type="evidence" value="ECO:0007669"/>
    <property type="project" value="UniProtKB-KW"/>
</dbReference>
<dbReference type="GO" id="GO:0003724">
    <property type="term" value="F:RNA helicase activity"/>
    <property type="evidence" value="ECO:0007669"/>
    <property type="project" value="UniProtKB-EC"/>
</dbReference>
<dbReference type="GO" id="GO:0006364">
    <property type="term" value="P:rRNA processing"/>
    <property type="evidence" value="ECO:0007669"/>
    <property type="project" value="UniProtKB-KW"/>
</dbReference>
<dbReference type="CDD" id="cd17946">
    <property type="entry name" value="DEADc_DDX24"/>
    <property type="match status" value="1"/>
</dbReference>
<dbReference type="CDD" id="cd18787">
    <property type="entry name" value="SF2_C_DEAD"/>
    <property type="match status" value="1"/>
</dbReference>
<dbReference type="Gene3D" id="3.40.50.300">
    <property type="entry name" value="P-loop containing nucleotide triphosphate hydrolases"/>
    <property type="match status" value="2"/>
</dbReference>
<dbReference type="InterPro" id="IPR011545">
    <property type="entry name" value="DEAD/DEAH_box_helicase_dom"/>
</dbReference>
<dbReference type="InterPro" id="IPR014001">
    <property type="entry name" value="Helicase_ATP-bd"/>
</dbReference>
<dbReference type="InterPro" id="IPR001650">
    <property type="entry name" value="Helicase_C-like"/>
</dbReference>
<dbReference type="InterPro" id="IPR027417">
    <property type="entry name" value="P-loop_NTPase"/>
</dbReference>
<dbReference type="InterPro" id="IPR000629">
    <property type="entry name" value="RNA-helicase_DEAD-box_CS"/>
</dbReference>
<dbReference type="InterPro" id="IPR014014">
    <property type="entry name" value="RNA_helicase_DEAD_Q_motif"/>
</dbReference>
<dbReference type="PANTHER" id="PTHR24031">
    <property type="entry name" value="RNA HELICASE"/>
    <property type="match status" value="1"/>
</dbReference>
<dbReference type="Pfam" id="PF00270">
    <property type="entry name" value="DEAD"/>
    <property type="match status" value="1"/>
</dbReference>
<dbReference type="Pfam" id="PF00271">
    <property type="entry name" value="Helicase_C"/>
    <property type="match status" value="1"/>
</dbReference>
<dbReference type="SMART" id="SM00487">
    <property type="entry name" value="DEXDc"/>
    <property type="match status" value="1"/>
</dbReference>
<dbReference type="SMART" id="SM00490">
    <property type="entry name" value="HELICc"/>
    <property type="match status" value="1"/>
</dbReference>
<dbReference type="SUPFAM" id="SSF52540">
    <property type="entry name" value="P-loop containing nucleoside triphosphate hydrolases"/>
    <property type="match status" value="1"/>
</dbReference>
<dbReference type="PROSITE" id="PS00039">
    <property type="entry name" value="DEAD_ATP_HELICASE"/>
    <property type="match status" value="1"/>
</dbReference>
<dbReference type="PROSITE" id="PS51192">
    <property type="entry name" value="HELICASE_ATP_BIND_1"/>
    <property type="match status" value="1"/>
</dbReference>
<dbReference type="PROSITE" id="PS51194">
    <property type="entry name" value="HELICASE_CTER"/>
    <property type="match status" value="1"/>
</dbReference>
<dbReference type="PROSITE" id="PS51195">
    <property type="entry name" value="Q_MOTIF"/>
    <property type="match status" value="1"/>
</dbReference>
<name>MAK5_PYRO7</name>
<proteinExistence type="inferred from homology"/>
<organism>
    <name type="scientific">Pyricularia oryzae (strain 70-15 / ATCC MYA-4617 / FGSC 8958)</name>
    <name type="common">Rice blast fungus</name>
    <name type="synonym">Magnaporthe oryzae</name>
    <dbReference type="NCBI Taxonomy" id="242507"/>
    <lineage>
        <taxon>Eukaryota</taxon>
        <taxon>Fungi</taxon>
        <taxon>Dikarya</taxon>
        <taxon>Ascomycota</taxon>
        <taxon>Pezizomycotina</taxon>
        <taxon>Sordariomycetes</taxon>
        <taxon>Sordariomycetidae</taxon>
        <taxon>Magnaporthales</taxon>
        <taxon>Pyriculariaceae</taxon>
        <taxon>Pyricularia</taxon>
    </lineage>
</organism>
<sequence length="760" mass="82752">MTTDTTKQKRKLDSKQNTSPKRRKVQANGKAQPKAKKPKRVVAADSLSWRSVEIPELFDDAEGFFGLEEVEGVDVIRDGGMVKFVTAAPAAEKEDEGDDFSGFDDNPESTSLVAAEEAKSEEPAKPQSQKKQQTKQPKSETKEKKEKPAKAKKNEKQTSKTDDDDLATGSFAALAEIDETDEGADVSEWEPLGLSEEIMSSIAKLKFAKPTAIQAATIPEILAGHDVVGKASTGSGKTLAFGIPIVEKWLSINASTQSKRVAEGETKTPIALVLSPTRELAHQLTDHIKNLCAGLATSPYVCSVTGGLSVHKQQRQLEKADIVVGTPGRLWEVLSSSTKLIQAFRGIKFLVVDEADRLLSEGHFKDAKDIFEGLDKVETDDDGIIRGGKARQTLVFSATFNKGLQQKLAGKGRFDLATDSQSMEYLLKKLKFREEIPKFIDVNPVSQMAEGLKEGIVECGAMEKDLYLYSLLLMHPTQRTLVFTNSISSVRRLTPMLQQLTLPVIALHSQMIQKARLRSVERFTSSKPGSASILIATDVAARGLDIRGIDVVIHYHVPRTADAYVHRSGRTARADSSGLSILICAPEEVTPTRRLVAKVHASAAAKGKKKGSAGGVFVHSVELDRRLVSKLRERVQLAKQIADSTLAKEKIGKEDNWMQKAAEELGVEYDSEDLEKASNWSGRGSGRKSKQKEAKEMSKAEVASLKAQLKQLLSKRINSGVNERYIANGNVDIDGLLSGAKGDFLGKVEGLGVSPLLATD</sequence>
<evidence type="ECO:0000250" key="1"/>
<evidence type="ECO:0000255" key="2">
    <source>
        <dbReference type="PROSITE-ProRule" id="PRU00541"/>
    </source>
</evidence>
<evidence type="ECO:0000255" key="3">
    <source>
        <dbReference type="PROSITE-ProRule" id="PRU00542"/>
    </source>
</evidence>
<evidence type="ECO:0000255" key="4">
    <source>
        <dbReference type="PROSITE-ProRule" id="PRU00552"/>
    </source>
</evidence>
<evidence type="ECO:0000256" key="5">
    <source>
        <dbReference type="SAM" id="MobiDB-lite"/>
    </source>
</evidence>
<evidence type="ECO:0000305" key="6"/>
<protein>
    <recommendedName>
        <fullName>ATP-dependent RNA helicase MAK5</fullName>
        <ecNumber>3.6.4.13</ecNumber>
    </recommendedName>
</protein>